<evidence type="ECO:0000250" key="1"/>
<evidence type="ECO:0000269" key="2">
    <source>
    </source>
</evidence>
<evidence type="ECO:0000269" key="3">
    <source>
    </source>
</evidence>
<evidence type="ECO:0000269" key="4">
    <source>
    </source>
</evidence>
<evidence type="ECO:0000269" key="5">
    <source>
    </source>
</evidence>
<evidence type="ECO:0000269" key="6">
    <source>
    </source>
</evidence>
<evidence type="ECO:0000303" key="7">
    <source>
    </source>
</evidence>
<evidence type="ECO:0000303" key="8">
    <source>
    </source>
</evidence>
<evidence type="ECO:0000305" key="9"/>
<name>SSEJ_SALTY</name>
<gene>
    <name type="primary">sseJ</name>
    <name type="ordered locus">STM1631</name>
</gene>
<dbReference type="EC" id="3.-.-.-"/>
<dbReference type="EMBL" id="AF294582">
    <property type="protein sequence ID" value="AAG02230.1"/>
    <property type="molecule type" value="Genomic_DNA"/>
</dbReference>
<dbReference type="EMBL" id="AE006468">
    <property type="protein sequence ID" value="AAL20549.1"/>
    <property type="molecule type" value="Genomic_DNA"/>
</dbReference>
<dbReference type="RefSeq" id="NP_460590.1">
    <property type="nucleotide sequence ID" value="NC_003197.2"/>
</dbReference>
<dbReference type="RefSeq" id="WP_001131430.1">
    <property type="nucleotide sequence ID" value="NC_003197.2"/>
</dbReference>
<dbReference type="SMR" id="Q9FD10"/>
<dbReference type="IntAct" id="Q9FD10">
    <property type="interactions" value="2"/>
</dbReference>
<dbReference type="STRING" id="99287.STM1631"/>
<dbReference type="PaxDb" id="99287-STM1631"/>
<dbReference type="GeneID" id="1253149"/>
<dbReference type="KEGG" id="stm:STM1631"/>
<dbReference type="PATRIC" id="fig|99287.12.peg.1723"/>
<dbReference type="HOGENOM" id="CLU_674196_0_0_6"/>
<dbReference type="OMA" id="CIFKLYH"/>
<dbReference type="BioCyc" id="SENT99287:STM1631-MONOMER"/>
<dbReference type="PHI-base" id="PHI:10191"/>
<dbReference type="Proteomes" id="UP000001014">
    <property type="component" value="Chromosome"/>
</dbReference>
<dbReference type="GO" id="GO:0005576">
    <property type="term" value="C:extracellular region"/>
    <property type="evidence" value="ECO:0007669"/>
    <property type="project" value="UniProtKB-SubCell"/>
</dbReference>
<dbReference type="GO" id="GO:0044174">
    <property type="term" value="C:host cell endosome"/>
    <property type="evidence" value="ECO:0000315"/>
    <property type="project" value="AgBase"/>
</dbReference>
<dbReference type="GO" id="GO:0033644">
    <property type="term" value="C:host cell membrane"/>
    <property type="evidence" value="ECO:0000315"/>
    <property type="project" value="AgBase"/>
</dbReference>
<dbReference type="GO" id="GO:0034736">
    <property type="term" value="F:cholesterol O-acyltransferase activity"/>
    <property type="evidence" value="ECO:0000314"/>
    <property type="project" value="AgBase"/>
</dbReference>
<dbReference type="GO" id="GO:0047178">
    <property type="term" value="F:glycerophospholipid acyltransferase (CoA-dependent) activity"/>
    <property type="evidence" value="ECO:0000314"/>
    <property type="project" value="AgBase"/>
</dbReference>
<dbReference type="GO" id="GO:0016298">
    <property type="term" value="F:lipase activity"/>
    <property type="evidence" value="ECO:0000314"/>
    <property type="project" value="AgBase"/>
</dbReference>
<dbReference type="GO" id="GO:0031267">
    <property type="term" value="F:small GTPase binding"/>
    <property type="evidence" value="ECO:0000353"/>
    <property type="project" value="AgBase"/>
</dbReference>
<dbReference type="CDD" id="cd01846">
    <property type="entry name" value="fatty_acyltransferase_like"/>
    <property type="match status" value="1"/>
</dbReference>
<dbReference type="FunFam" id="3.30.2440.10:FF:000002">
    <property type="entry name" value="SPI-2 type III secretion system effector SseJ"/>
    <property type="match status" value="1"/>
</dbReference>
<dbReference type="Gene3D" id="3.30.2440.10">
    <property type="entry name" value="Secreted effector protein SifA"/>
    <property type="match status" value="1"/>
</dbReference>
<dbReference type="Gene3D" id="3.40.50.1110">
    <property type="entry name" value="SGNH hydrolase"/>
    <property type="match status" value="1"/>
</dbReference>
<dbReference type="InterPro" id="IPR001087">
    <property type="entry name" value="GDSL"/>
</dbReference>
<dbReference type="InterPro" id="IPR036514">
    <property type="entry name" value="SGNH_hydro_sf"/>
</dbReference>
<dbReference type="InterPro" id="IPR010637">
    <property type="entry name" value="Sif"/>
</dbReference>
<dbReference type="NCBIfam" id="NF011908">
    <property type="entry name" value="PRK15381.1"/>
    <property type="match status" value="1"/>
</dbReference>
<dbReference type="PANTHER" id="PTHR22835:SF659">
    <property type="entry name" value="GDSL LIPASE_ACYLHYDROLASE, PUTATIVE (AFU_ORTHOLOGUE AFUA_2G00510)-RELATED"/>
    <property type="match status" value="1"/>
</dbReference>
<dbReference type="PANTHER" id="PTHR22835">
    <property type="entry name" value="ZINC FINGER FYVE DOMAIN CONTAINING PROTEIN"/>
    <property type="match status" value="1"/>
</dbReference>
<dbReference type="Pfam" id="PF00657">
    <property type="entry name" value="Lipase_GDSL"/>
    <property type="match status" value="1"/>
</dbReference>
<dbReference type="Pfam" id="PF06767">
    <property type="entry name" value="Sif"/>
    <property type="match status" value="1"/>
</dbReference>
<dbReference type="SUPFAM" id="SSF52266">
    <property type="entry name" value="SGNH hydrolase"/>
    <property type="match status" value="1"/>
</dbReference>
<accession>Q9FD10</accession>
<accession>Q7BIM8</accession>
<feature type="chain" id="PRO_0000391492" description="Secreted effector protein SseJ">
    <location>
        <begin position="1"/>
        <end position="408"/>
    </location>
</feature>
<feature type="active site" description="Nucleophile" evidence="9">
    <location>
        <position position="151"/>
    </location>
</feature>
<feature type="active site" evidence="1">
    <location>
        <position position="381"/>
    </location>
</feature>
<feature type="active site" evidence="9">
    <location>
        <position position="384"/>
    </location>
</feature>
<feature type="mutagenesis site" description="5-fold decrease in deacylase activity. Does not affect translocation by T3SS and cellular localization." evidence="2">
    <original>S</original>
    <variation>A</variation>
    <location>
        <position position="151"/>
    </location>
</feature>
<feature type="mutagenesis site" description="No change in deacylase activity." evidence="2">
    <original>S</original>
    <variation>A</variation>
    <location>
        <position position="153"/>
    </location>
</feature>
<feature type="mutagenesis site" description="5-fold decrease in deacylase activity. Does not affect translocation by T3SS and cellular localization." evidence="2">
    <original>D</original>
    <variation>N</variation>
    <location>
        <position position="247"/>
    </location>
</feature>
<feature type="mutagenesis site" description="5-fold decrease in deacylase activity. Does not affect translocation by T3SS and cellular localization." evidence="2">
    <original>H</original>
    <variation>N</variation>
    <location>
        <position position="384"/>
    </location>
</feature>
<organism>
    <name type="scientific">Salmonella typhimurium (strain LT2 / SGSC1412 / ATCC 700720)</name>
    <dbReference type="NCBI Taxonomy" id="99287"/>
    <lineage>
        <taxon>Bacteria</taxon>
        <taxon>Pseudomonadati</taxon>
        <taxon>Pseudomonadota</taxon>
        <taxon>Gammaproteobacteria</taxon>
        <taxon>Enterobacterales</taxon>
        <taxon>Enterobacteriaceae</taxon>
        <taxon>Salmonella</taxon>
    </lineage>
</organism>
<reference key="1">
    <citation type="journal article" date="2000" name="Proc. Natl. Acad. Sci. U.S.A.">
        <title>A conserved amino acid sequence directing intracellular type III secretion by Salmonella typhimurium.</title>
        <authorList>
            <person name="Miao E.A."/>
            <person name="Miller S.I."/>
        </authorList>
    </citation>
    <scope>NUCLEOTIDE SEQUENCE [GENOMIC DNA]</scope>
    <scope>SUBCELLULAR LOCATION</scope>
    <scope>SECRETION VIA TYPE III SECRETION SYSTEM</scope>
    <source>
        <strain>LT2 / SGSC1412 / ATCC 700720</strain>
    </source>
</reference>
<reference key="2">
    <citation type="journal article" date="2001" name="Nature">
        <title>Complete genome sequence of Salmonella enterica serovar Typhimurium LT2.</title>
        <authorList>
            <person name="McClelland M."/>
            <person name="Sanderson K.E."/>
            <person name="Spieth J."/>
            <person name="Clifton S.W."/>
            <person name="Latreille P."/>
            <person name="Courtney L."/>
            <person name="Porwollik S."/>
            <person name="Ali J."/>
            <person name="Dante M."/>
            <person name="Du F."/>
            <person name="Hou S."/>
            <person name="Layman D."/>
            <person name="Leonard S."/>
            <person name="Nguyen C."/>
            <person name="Scott K."/>
            <person name="Holmes A."/>
            <person name="Grewal N."/>
            <person name="Mulvaney E."/>
            <person name="Ryan E."/>
            <person name="Sun H."/>
            <person name="Florea L."/>
            <person name="Miller W."/>
            <person name="Stoneking T."/>
            <person name="Nhan M."/>
            <person name="Waterston R."/>
            <person name="Wilson R.K."/>
        </authorList>
    </citation>
    <scope>NUCLEOTIDE SEQUENCE [LARGE SCALE GENOMIC DNA]</scope>
    <source>
        <strain>LT2 / SGSC1412 / ATCC 700720</strain>
    </source>
</reference>
<reference key="3">
    <citation type="journal article" date="2003" name="Infect. Immun.">
        <title>The Salmonella enterica serovar typhimurium translocated effectors SseJ and SifB are targeted to the Salmonella-containing vacuole.</title>
        <authorList>
            <person name="Freeman J.A."/>
            <person name="Ohl M.E."/>
            <person name="Miller S.I."/>
        </authorList>
    </citation>
    <scope>SUBCELLULAR LOCATION</scope>
    <scope>SECRETION VIA TYPE III SECRETION SYSTEM</scope>
    <source>
        <strain>ATCC 14028s / SGSG 2262</strain>
    </source>
</reference>
<reference key="4">
    <citation type="journal article" date="2005" name="Infect. Immun.">
        <title>SseJ deacylase activity by Salmonella enterica serovar Typhimurium promotes virulence in mice.</title>
        <authorList>
            <person name="Ohlson M.B."/>
            <person name="Fluhr K."/>
            <person name="Birmingham C.L."/>
            <person name="Brumell J.H."/>
            <person name="Miller S.I."/>
        </authorList>
    </citation>
    <scope>FUNCTION</scope>
    <scope>DEACYLASE ACTIVITY</scope>
    <scope>MUTAGENESIS OF SER-151; SER-153; ASP-247 AND HIS-384</scope>
    <source>
        <strain>ATCC 14028s / SGSG 2262</strain>
    </source>
</reference>
<reference key="5">
    <citation type="journal article" date="2008" name="Cell Host Microbe">
        <title>Structure and function of Salmonella SifA indicate that its interactions with SKIP, SseJ, and RhoA family GTPases induce endosomal tubulation.</title>
        <authorList>
            <person name="Ohlson M.B."/>
            <person name="Huang Z."/>
            <person name="Alto N.M."/>
            <person name="Blanc M.-P."/>
            <person name="Dixon J.E."/>
            <person name="Chai J."/>
            <person name="Miller S.I."/>
        </authorList>
    </citation>
    <scope>INTERACTION WITH RHOA AND SIFA</scope>
</reference>
<reference key="6">
    <citation type="journal article" date="2008" name="Mol. Microbiol.">
        <title>Esterification of cholesterol by a type III secretion effector during intracellular Salmonella infection.</title>
        <authorList>
            <person name="Nawabi P."/>
            <person name="Catron D.M."/>
            <person name="Haldar K."/>
        </authorList>
    </citation>
    <scope>FUNCTION</scope>
    <scope>ESTERIFICATION ACTIVITY</scope>
    <scope>DISRUPTION PHENOTYPE</scope>
</reference>
<reference key="7">
    <citation type="journal article" date="2010" name="Infect. Immun.">
        <title>Systematic analysis of the SsrAB virulon of Salmonella enterica.</title>
        <authorList>
            <person name="Xu X."/>
            <person name="Hensel M."/>
        </authorList>
    </citation>
    <scope>INDUCTION</scope>
    <source>
        <strain evidence="7">ATCC 14028 / SGSC 2980 / CDC 6516-60 / NCTC 12023</strain>
    </source>
</reference>
<reference key="8">
    <citation type="journal article" date="2011" name="J. Biol. Chem.">
        <title>Salmonella enterica response regulator SsrB relieves H-NS silencing by displacing H-NS bound in polymerization mode and directly activates transcription.</title>
        <authorList>
            <person name="Walthers D."/>
            <person name="Li Y."/>
            <person name="Liu Y."/>
            <person name="Anand G."/>
            <person name="Yan J."/>
            <person name="Kenney L.J."/>
        </authorList>
    </citation>
    <scope>INDUCTION</scope>
    <source>
        <strain evidence="8">14028s / SGSC 2262</strain>
    </source>
</reference>
<protein>
    <recommendedName>
        <fullName>Secreted effector protein SseJ</fullName>
        <ecNumber>3.-.-.-</ecNumber>
    </recommendedName>
    <alternativeName>
        <fullName>Salmonella-translocated effector J</fullName>
        <shortName>STE J</shortName>
    </alternativeName>
</protein>
<sequence>MPLSVGQGYFTSSISSEKFNAIKESARLPELSLWEKIKAYFFTTHHAEALECIFNLYHHQELNLTPVQVRGAYIKLRALASQGCKEQFIIESQEHADKLIIKDDNGENILSIEVECHPEAFGLAKEINKSHPKPKNISLGDITRLVFFGDSLSDSLGRMFEKTHHILPSYGQYFGGRFTNGFTWTEFLSSPHFLGKEMLNFAEGGSTSASYSCFNCIGDFVSNTDRQVASYTPSHQDLAIFLLGANDYMTLHKDNVIMVVEQQIDDIEKIISGGVNNVLVMGIPDLSLTPYGKHSDEKRKLKDESIAHNALLKTNVEELKEKYPQHKICYYETADAFKVIMEAASNIGYDTENPYTHHGYVHVPGAKDPQLDICPQYVFNDLVHPTQEVHHCFAIMLESFIAHHYSTE</sequence>
<comment type="function">
    <text evidence="2 3">Effector proteins function to alter host cell physiology and promote bacterial survival in host tissues. This protein is required for endosomal tubulation and negatively regulates the formation of Salmonella-induced filaments (Sifs) in epithelial cells. Has both deacylase and esterification activities in vitro, but esterification is probably the dominant activity in host cells. Significantly contributes to cholesterol esterification, which reduces cellular cholesterol in cells and abrogates the ability of SifA to associate with cholesterol and LAMP-1 vesicles.</text>
</comment>
<comment type="subunit">
    <text evidence="4">Interacts with RhoA and indirectly with SifA.</text>
</comment>
<comment type="interaction">
    <interactant intactId="EBI-10690199">
        <id>Q9FD10</id>
    </interactant>
    <interactant intactId="EBI-446668">
        <id>P61586</id>
        <label>RHOA</label>
    </interactant>
    <organismsDiffer>true</organismsDiffer>
    <experiments>3</experiments>
</comment>
<comment type="subcellular location">
    <subcellularLocation>
        <location>Secreted</location>
    </subcellularLocation>
    <subcellularLocation>
        <location>Host cytoplasm</location>
    </subcellularLocation>
    <text>Secreted via type III secretion system 2 (SPI-2 T3SS), and delivered into the host cytoplasm. Localizes to the Salmonella-containing vacuole (SCV) at early time points following invasion and subsequently traffics away from the SCV along Salmonella-induced filaments (Sifs) in epithelial cells.</text>
</comment>
<comment type="induction">
    <text evidence="5 6">Very highly expressed in host macrophages and when grown in an acidic environment; repressed by H-NS and induced by SsrB.</text>
</comment>
<comment type="disruption phenotype">
    <text evidence="3">Mutants have reduced cholesterol esterification activity as well as reduced lipid droplets.</text>
</comment>
<comment type="similarity">
    <text evidence="9">Belongs to the 'GDSL' lipolytic enzyme family.</text>
</comment>
<proteinExistence type="evidence at protein level"/>
<keyword id="KW-1035">Host cytoplasm</keyword>
<keyword id="KW-0378">Hydrolase</keyword>
<keyword id="KW-1185">Reference proteome</keyword>
<keyword id="KW-0964">Secreted</keyword>
<keyword id="KW-0843">Virulence</keyword>